<protein>
    <recommendedName>
        <fullName evidence="1">Large ribosomal subunit protein bL20</fullName>
    </recommendedName>
    <alternativeName>
        <fullName evidence="2">50S ribosomal protein L20</fullName>
    </alternativeName>
</protein>
<feature type="chain" id="PRO_1000122288" description="Large ribosomal subunit protein bL20">
    <location>
        <begin position="1"/>
        <end position="119"/>
    </location>
</feature>
<accession>B3PL13</accession>
<keyword id="KW-1185">Reference proteome</keyword>
<keyword id="KW-0687">Ribonucleoprotein</keyword>
<keyword id="KW-0689">Ribosomal protein</keyword>
<keyword id="KW-0694">RNA-binding</keyword>
<keyword id="KW-0699">rRNA-binding</keyword>
<name>RL20_CELJU</name>
<organism>
    <name type="scientific">Cellvibrio japonicus (strain Ueda107)</name>
    <name type="common">Pseudomonas fluorescens subsp. cellulosa</name>
    <dbReference type="NCBI Taxonomy" id="498211"/>
    <lineage>
        <taxon>Bacteria</taxon>
        <taxon>Pseudomonadati</taxon>
        <taxon>Pseudomonadota</taxon>
        <taxon>Gammaproteobacteria</taxon>
        <taxon>Cellvibrionales</taxon>
        <taxon>Cellvibrionaceae</taxon>
        <taxon>Cellvibrio</taxon>
    </lineage>
</organism>
<dbReference type="EMBL" id="CP000934">
    <property type="protein sequence ID" value="ACE84234.1"/>
    <property type="molecule type" value="Genomic_DNA"/>
</dbReference>
<dbReference type="RefSeq" id="WP_012488123.1">
    <property type="nucleotide sequence ID" value="NC_010995.1"/>
</dbReference>
<dbReference type="SMR" id="B3PL13"/>
<dbReference type="STRING" id="498211.CJA_2527"/>
<dbReference type="KEGG" id="cja:CJA_2527"/>
<dbReference type="eggNOG" id="COG0292">
    <property type="taxonomic scope" value="Bacteria"/>
</dbReference>
<dbReference type="HOGENOM" id="CLU_123265_0_1_6"/>
<dbReference type="OrthoDB" id="9808966at2"/>
<dbReference type="Proteomes" id="UP000001036">
    <property type="component" value="Chromosome"/>
</dbReference>
<dbReference type="GO" id="GO:1990904">
    <property type="term" value="C:ribonucleoprotein complex"/>
    <property type="evidence" value="ECO:0007669"/>
    <property type="project" value="UniProtKB-KW"/>
</dbReference>
<dbReference type="GO" id="GO:0005840">
    <property type="term" value="C:ribosome"/>
    <property type="evidence" value="ECO:0007669"/>
    <property type="project" value="UniProtKB-KW"/>
</dbReference>
<dbReference type="GO" id="GO:0019843">
    <property type="term" value="F:rRNA binding"/>
    <property type="evidence" value="ECO:0007669"/>
    <property type="project" value="UniProtKB-UniRule"/>
</dbReference>
<dbReference type="GO" id="GO:0003735">
    <property type="term" value="F:structural constituent of ribosome"/>
    <property type="evidence" value="ECO:0007669"/>
    <property type="project" value="InterPro"/>
</dbReference>
<dbReference type="GO" id="GO:0000027">
    <property type="term" value="P:ribosomal large subunit assembly"/>
    <property type="evidence" value="ECO:0007669"/>
    <property type="project" value="UniProtKB-UniRule"/>
</dbReference>
<dbReference type="GO" id="GO:0006412">
    <property type="term" value="P:translation"/>
    <property type="evidence" value="ECO:0007669"/>
    <property type="project" value="InterPro"/>
</dbReference>
<dbReference type="CDD" id="cd07026">
    <property type="entry name" value="Ribosomal_L20"/>
    <property type="match status" value="1"/>
</dbReference>
<dbReference type="FunFam" id="1.10.1900.20:FF:000001">
    <property type="entry name" value="50S ribosomal protein L20"/>
    <property type="match status" value="1"/>
</dbReference>
<dbReference type="Gene3D" id="6.10.160.10">
    <property type="match status" value="1"/>
</dbReference>
<dbReference type="Gene3D" id="1.10.1900.20">
    <property type="entry name" value="Ribosomal protein L20"/>
    <property type="match status" value="1"/>
</dbReference>
<dbReference type="HAMAP" id="MF_00382">
    <property type="entry name" value="Ribosomal_bL20"/>
    <property type="match status" value="1"/>
</dbReference>
<dbReference type="InterPro" id="IPR005813">
    <property type="entry name" value="Ribosomal_bL20"/>
</dbReference>
<dbReference type="InterPro" id="IPR049946">
    <property type="entry name" value="RIBOSOMAL_L20_CS"/>
</dbReference>
<dbReference type="InterPro" id="IPR035566">
    <property type="entry name" value="Ribosomal_protein_bL20_C"/>
</dbReference>
<dbReference type="NCBIfam" id="TIGR01032">
    <property type="entry name" value="rplT_bact"/>
    <property type="match status" value="1"/>
</dbReference>
<dbReference type="PANTHER" id="PTHR10986">
    <property type="entry name" value="39S RIBOSOMAL PROTEIN L20"/>
    <property type="match status" value="1"/>
</dbReference>
<dbReference type="Pfam" id="PF00453">
    <property type="entry name" value="Ribosomal_L20"/>
    <property type="match status" value="1"/>
</dbReference>
<dbReference type="PRINTS" id="PR00062">
    <property type="entry name" value="RIBOSOMALL20"/>
</dbReference>
<dbReference type="SUPFAM" id="SSF74731">
    <property type="entry name" value="Ribosomal protein L20"/>
    <property type="match status" value="1"/>
</dbReference>
<dbReference type="PROSITE" id="PS00937">
    <property type="entry name" value="RIBOSOMAL_L20"/>
    <property type="match status" value="1"/>
</dbReference>
<evidence type="ECO:0000255" key="1">
    <source>
        <dbReference type="HAMAP-Rule" id="MF_00382"/>
    </source>
</evidence>
<evidence type="ECO:0000305" key="2"/>
<sequence>MARVKRGVEARRRHKKVLKAAKGYYGARSRVFRVAKQAVIKAGQYAYRDRRVKKRNFRALWITRINAQSRAEGLTYSQLIAGLKKASIVLDRRVLADLAVYDKAAFAAVVAKAKSALAA</sequence>
<reference key="1">
    <citation type="journal article" date="2008" name="J. Bacteriol.">
        <title>Insights into plant cell wall degradation from the genome sequence of the soil bacterium Cellvibrio japonicus.</title>
        <authorList>
            <person name="DeBoy R.T."/>
            <person name="Mongodin E.F."/>
            <person name="Fouts D.E."/>
            <person name="Tailford L.E."/>
            <person name="Khouri H."/>
            <person name="Emerson J.B."/>
            <person name="Mohamoud Y."/>
            <person name="Watkins K."/>
            <person name="Henrissat B."/>
            <person name="Gilbert H.J."/>
            <person name="Nelson K.E."/>
        </authorList>
    </citation>
    <scope>NUCLEOTIDE SEQUENCE [LARGE SCALE GENOMIC DNA]</scope>
    <source>
        <strain>Ueda107</strain>
    </source>
</reference>
<gene>
    <name evidence="1" type="primary">rplT</name>
    <name type="ordered locus">CJA_2527</name>
</gene>
<comment type="function">
    <text evidence="1">Binds directly to 23S ribosomal RNA and is necessary for the in vitro assembly process of the 50S ribosomal subunit. It is not involved in the protein synthesizing functions of that subunit.</text>
</comment>
<comment type="similarity">
    <text evidence="1">Belongs to the bacterial ribosomal protein bL20 family.</text>
</comment>
<proteinExistence type="inferred from homology"/>